<protein>
    <recommendedName>
        <fullName evidence="1">Ribosome-binding factor A</fullName>
    </recommendedName>
</protein>
<keyword id="KW-0963">Cytoplasm</keyword>
<keyword id="KW-0690">Ribosome biogenesis</keyword>
<dbReference type="EMBL" id="CP000703">
    <property type="protein sequence ID" value="ABQ49127.1"/>
    <property type="status" value="ALT_INIT"/>
    <property type="molecule type" value="Genomic_DNA"/>
</dbReference>
<dbReference type="RefSeq" id="WP_000097322.1">
    <property type="nucleotide sequence ID" value="NC_009487.1"/>
</dbReference>
<dbReference type="SMR" id="A5ISF4"/>
<dbReference type="KEGG" id="saj:SaurJH9_1330"/>
<dbReference type="HOGENOM" id="CLU_089475_6_3_9"/>
<dbReference type="GO" id="GO:0005829">
    <property type="term" value="C:cytosol"/>
    <property type="evidence" value="ECO:0007669"/>
    <property type="project" value="TreeGrafter"/>
</dbReference>
<dbReference type="GO" id="GO:0043024">
    <property type="term" value="F:ribosomal small subunit binding"/>
    <property type="evidence" value="ECO:0007669"/>
    <property type="project" value="TreeGrafter"/>
</dbReference>
<dbReference type="GO" id="GO:0030490">
    <property type="term" value="P:maturation of SSU-rRNA"/>
    <property type="evidence" value="ECO:0007669"/>
    <property type="project" value="UniProtKB-UniRule"/>
</dbReference>
<dbReference type="FunFam" id="3.30.300.20:FF:000009">
    <property type="entry name" value="Ribosome-binding factor A"/>
    <property type="match status" value="1"/>
</dbReference>
<dbReference type="Gene3D" id="3.30.300.20">
    <property type="match status" value="1"/>
</dbReference>
<dbReference type="HAMAP" id="MF_00003">
    <property type="entry name" value="RbfA"/>
    <property type="match status" value="1"/>
</dbReference>
<dbReference type="InterPro" id="IPR015946">
    <property type="entry name" value="KH_dom-like_a/b"/>
</dbReference>
<dbReference type="InterPro" id="IPR000238">
    <property type="entry name" value="RbfA"/>
</dbReference>
<dbReference type="InterPro" id="IPR023799">
    <property type="entry name" value="RbfA_dom_sf"/>
</dbReference>
<dbReference type="InterPro" id="IPR020053">
    <property type="entry name" value="Ribosome-bd_factorA_CS"/>
</dbReference>
<dbReference type="NCBIfam" id="TIGR00082">
    <property type="entry name" value="rbfA"/>
    <property type="match status" value="1"/>
</dbReference>
<dbReference type="PANTHER" id="PTHR33515">
    <property type="entry name" value="RIBOSOME-BINDING FACTOR A, CHLOROPLASTIC-RELATED"/>
    <property type="match status" value="1"/>
</dbReference>
<dbReference type="PANTHER" id="PTHR33515:SF1">
    <property type="entry name" value="RIBOSOME-BINDING FACTOR A, CHLOROPLASTIC-RELATED"/>
    <property type="match status" value="1"/>
</dbReference>
<dbReference type="Pfam" id="PF02033">
    <property type="entry name" value="RBFA"/>
    <property type="match status" value="1"/>
</dbReference>
<dbReference type="SUPFAM" id="SSF89919">
    <property type="entry name" value="Ribosome-binding factor A, RbfA"/>
    <property type="match status" value="1"/>
</dbReference>
<dbReference type="PROSITE" id="PS01319">
    <property type="entry name" value="RBFA"/>
    <property type="match status" value="1"/>
</dbReference>
<evidence type="ECO:0000255" key="1">
    <source>
        <dbReference type="HAMAP-Rule" id="MF_00003"/>
    </source>
</evidence>
<evidence type="ECO:0000305" key="2"/>
<proteinExistence type="inferred from homology"/>
<reference key="1">
    <citation type="submission" date="2007-05" db="EMBL/GenBank/DDBJ databases">
        <title>Complete sequence of chromosome of Staphylococcus aureus subsp. aureus JH9.</title>
        <authorList>
            <consortium name="US DOE Joint Genome Institute"/>
            <person name="Copeland A."/>
            <person name="Lucas S."/>
            <person name="Lapidus A."/>
            <person name="Barry K."/>
            <person name="Detter J.C."/>
            <person name="Glavina del Rio T."/>
            <person name="Hammon N."/>
            <person name="Israni S."/>
            <person name="Pitluck S."/>
            <person name="Chain P."/>
            <person name="Malfatti S."/>
            <person name="Shin M."/>
            <person name="Vergez L."/>
            <person name="Schmutz J."/>
            <person name="Larimer F."/>
            <person name="Land M."/>
            <person name="Hauser L."/>
            <person name="Kyrpides N."/>
            <person name="Kim E."/>
            <person name="Tomasz A."/>
            <person name="Richardson P."/>
        </authorList>
    </citation>
    <scope>NUCLEOTIDE SEQUENCE [LARGE SCALE GENOMIC DNA]</scope>
    <source>
        <strain>JH9</strain>
    </source>
</reference>
<comment type="function">
    <text evidence="1">One of several proteins that assist in the late maturation steps of the functional core of the 30S ribosomal subunit. Associates with free 30S ribosomal subunits (but not with 30S subunits that are part of 70S ribosomes or polysomes). Required for efficient processing of 16S rRNA. May interact with the 5'-terminal helix region of 16S rRNA.</text>
</comment>
<comment type="subunit">
    <text evidence="1">Monomer. Binds 30S ribosomal subunits, but not 50S ribosomal subunits or 70S ribosomes.</text>
</comment>
<comment type="subcellular location">
    <subcellularLocation>
        <location evidence="1">Cytoplasm</location>
    </subcellularLocation>
</comment>
<comment type="similarity">
    <text evidence="1">Belongs to the RbfA family.</text>
</comment>
<comment type="sequence caution" evidence="2">
    <conflict type="erroneous initiation">
        <sequence resource="EMBL-CDS" id="ABQ49127"/>
    </conflict>
    <text>Extended N-terminus.</text>
</comment>
<accession>A5ISF4</accession>
<gene>
    <name evidence="1" type="primary">rbfA</name>
    <name type="ordered locus">SaurJH9_1330</name>
</gene>
<organism>
    <name type="scientific">Staphylococcus aureus (strain JH9)</name>
    <dbReference type="NCBI Taxonomy" id="359786"/>
    <lineage>
        <taxon>Bacteria</taxon>
        <taxon>Bacillati</taxon>
        <taxon>Bacillota</taxon>
        <taxon>Bacilli</taxon>
        <taxon>Bacillales</taxon>
        <taxon>Staphylococcaceae</taxon>
        <taxon>Staphylococcus</taxon>
    </lineage>
</organism>
<name>RBFA_STAA9</name>
<sequence length="116" mass="13515">MSSMRAERVGEQMKKELMDIINNKVKDPRVGFITITDVVLTNDLSQAKVFLTVLGNDKEVENTFKALDKAKGFIKSELGSRMRLRIMPELMYEYDQSIEYGNKIERMIQDLHKQDR</sequence>
<feature type="chain" id="PRO_0000329334" description="Ribosome-binding factor A">
    <location>
        <begin position="1"/>
        <end position="116"/>
    </location>
</feature>